<sequence>MALRDFCSVDGSDLFWEWNVTWNTSNPDFTKCFQNTVLVWVPCSYLWVCFPFYFLYLSHHDRGYIQMTHLNKAKTALGFLLWIVCWADLFYSFWERSMGKLLAPVFLVSPTLLGITMLLATFLIQIERRRGVQSSGIMLTFWLIALLCALAILRSKIMTALKEDARVDVFRDVTFYIYFSLVLIQLVLSCFSDRSPLFSETINDPNPCPESSASFLSRITFWWITGMMVQGYRQPLESTDLWSLNKEDTSEQVVPVLVKNWKKECAKSRKQPVKIVYSSKDPAKPKGSSKVDVNEEAEALIVKCPQKERDPSLFKVLYKTFGPYFLMSFLFKAVHDLMMFAGPEILKLLINFVNDKKAPEWQGYFYTALLFISACLQTLVLHQYFHICFVSGMRIKTAVIGAVYRKALVITNAARKSSTVGEIVNLMSVDAQRFMDLATYINMIWSAPLQVILALYLLWLNLGPSVLAGVAVMVLMVPLNAVMAMKTKTYQVAHMKSKDNRIKLMNEILNGIKVLKLYAWELAFKDKVLAIRQEELKVLKKSAYLAAVGTFTWVCTPFLVALSTFAVYVTVDENNILDAQKAFVSLALFNILRFPLNILPMVISSIVQASVSLKRLRVFLSHEDLDPDSIQRRPIKDAGATNSITVKNATFTWARNDPPTLHGITFSVPEGSLVAVVGQVGCGKSSLLSALLAEMDKVEGHVTVKGSVAYVPQQAWIQNISLRENILFGRQLQERYYKAVVEACALLPDLEILPSGDRTEIGEKGVNLSGGQKQRVSLARAVYCDSDVYLLDDPLSAVDAHVGKHIFENVIGPKGLLKNKTRLLVTHAISYLPQMDVIIVMSGGKISEMGSYQELLARDGAFAEFLRTYASAEQEQGQPEDGLAGVGGPGKEVKQMENGMLVTDTAGKQMQRQLSSSSSYSRDVSQHHTSTAELRKPGPTEETWKLVEADKAQTGQVKLSVYWDYMKAIGLFISFLSIFLFLCNHVASLVSNYWLSLWTDDPIVNGTQEHTQVRLSVYGALGISQGITVFGYSMAVSIGGIFASRRLHLDLLHNVLRSPISFFERTPSGNLVNRFSKELDTVDSMIPQVIKMFMGSLFNVIGACIIILLATPMAAVIIPPLGLIYFFVQRFYVASSRQLKRLESVSRSPVYSHFNETLLGVSVIRAFEEQERFIRQSDLKVDENQKAYYPSIVANRWLAVRLECVGNCIVLFASLFAVISRHSLSAGLVGLSVSYSLQVTTYLNWLVRMSSEMETNIVAVERLKEYSETEKEAPWQIQDMAPPKDWPQVGRVEFRDYGLRYREDLDLVLKHINVTIDGGEKVGIVGRTGAGKSSLTLGLFRIKESAEGEIIIDDINIAKIGLHDLRFKITIIPQDPVLFSGSLRMNLDPFSQYSDEEVWTSLELAHLKGFVSALPDKLNHECAEGGENLSVGQRQLVCLARALLRKTKILVLDEATAAVDLETDDLIQSTIRTQFDDCTVLTIAHRLNTIMDYTRVIVLDKGEIQEWGSPSDLLQQRGLFYSMAKDSGLV</sequence>
<comment type="function">
    <text evidence="2 3 8">Mediates export of organic anions and drugs from the cytoplasm. Mediates ATP-dependent transport of glutathione and glutathione conjugates, leukotriene C4, estradiol-17-beta-o-glucuronide, methotrexate, antiviral drugs and other xenobiotics. Confers resistance to anticancer drugs by decreasing accumulation of drug in cells, and by mediating ATP- and GSH-dependent drug export (PubMed:12067707). Hydrolyzes ATP with low efficiency. Catalyzes the export of sphingosine 1-phosphate from mast cells independently of their degranulation (By similarity). Participates in inflammatory response by allowing export of leukotriene C4 from leukotriene C4-synthesizing cells (By similarity). Mediates ATP-dependent, GSH-independent cyclic GMP-AMP (cGAMP) export (By similarity). Thus, by limiting intracellular cGAMP concentrations negatively regulates the cGAS-STING pathway (By similarity). Exports S-geranylgeranyl-glutathione (GGG) in lymphoid cells and stromal compartments of lymphoid organs. ABCC1 (via extracellular transport) with GGT5 (via GGG catabolism) establish GGG gradients within lymphoid tissues to position P2RY8-positive lymphocytes at germinal centers in lymphoid follicles and restrict their chemotactic transmigration from blood vessels to the bone marrow parenchyma (By similarity). Mediates basolateral export of GSH-conjugated R- and S-prostaglandin A2 diastereomers in polarized epithelial cells (By similarity).</text>
</comment>
<comment type="catalytic activity">
    <reaction evidence="8">
        <text>ATP + H2O + xenobioticSide 1 = ADP + phosphate + xenobioticSide 2.</text>
        <dbReference type="EC" id="7.6.2.2"/>
    </reaction>
</comment>
<comment type="catalytic activity">
    <reaction evidence="2">
        <text>an S-substituted glutathione(in) + ATP + H2O = an S-substituted glutathione(out) + ADP + phosphate + H(+)</text>
        <dbReference type="Rhea" id="RHEA:19121"/>
        <dbReference type="ChEBI" id="CHEBI:15377"/>
        <dbReference type="ChEBI" id="CHEBI:15378"/>
        <dbReference type="ChEBI" id="CHEBI:30616"/>
        <dbReference type="ChEBI" id="CHEBI:43474"/>
        <dbReference type="ChEBI" id="CHEBI:90779"/>
        <dbReference type="ChEBI" id="CHEBI:456216"/>
        <dbReference type="EC" id="7.6.2.3"/>
    </reaction>
    <physiologicalReaction direction="left-to-right" evidence="2">
        <dbReference type="Rhea" id="RHEA:19122"/>
    </physiologicalReaction>
</comment>
<comment type="catalytic activity">
    <reaction evidence="3">
        <text>sphing-4-enine 1-phosphate(in) + ATP + H2O = sphing-4-enine 1-phosphate(out) + ADP + phosphate + H(+)</text>
        <dbReference type="Rhea" id="RHEA:38951"/>
        <dbReference type="ChEBI" id="CHEBI:15377"/>
        <dbReference type="ChEBI" id="CHEBI:15378"/>
        <dbReference type="ChEBI" id="CHEBI:30616"/>
        <dbReference type="ChEBI" id="CHEBI:43474"/>
        <dbReference type="ChEBI" id="CHEBI:60119"/>
        <dbReference type="ChEBI" id="CHEBI:456216"/>
    </reaction>
    <physiologicalReaction direction="left-to-right" evidence="3">
        <dbReference type="Rhea" id="RHEA:38952"/>
    </physiologicalReaction>
</comment>
<comment type="catalytic activity">
    <reaction evidence="3">
        <text>leukotriene C4(in) + ATP + H2O = leukotriene C4(out) + ADP + phosphate + H(+)</text>
        <dbReference type="Rhea" id="RHEA:38963"/>
        <dbReference type="ChEBI" id="CHEBI:15377"/>
        <dbReference type="ChEBI" id="CHEBI:15378"/>
        <dbReference type="ChEBI" id="CHEBI:30616"/>
        <dbReference type="ChEBI" id="CHEBI:43474"/>
        <dbReference type="ChEBI" id="CHEBI:57973"/>
        <dbReference type="ChEBI" id="CHEBI:456216"/>
    </reaction>
    <physiologicalReaction direction="left-to-right" evidence="3">
        <dbReference type="Rhea" id="RHEA:38964"/>
    </physiologicalReaction>
</comment>
<comment type="catalytic activity">
    <reaction evidence="3">
        <text>17beta-estradiol 17-O-(beta-D-glucuronate)(in) + ATP + H2O = 17beta-estradiol 17-O-(beta-D-glucuronate)(out) + ADP + phosphate + H(+)</text>
        <dbReference type="Rhea" id="RHEA:60128"/>
        <dbReference type="ChEBI" id="CHEBI:15377"/>
        <dbReference type="ChEBI" id="CHEBI:15378"/>
        <dbReference type="ChEBI" id="CHEBI:30616"/>
        <dbReference type="ChEBI" id="CHEBI:43474"/>
        <dbReference type="ChEBI" id="CHEBI:82961"/>
        <dbReference type="ChEBI" id="CHEBI:456216"/>
    </reaction>
    <physiologicalReaction direction="left-to-right" evidence="3">
        <dbReference type="Rhea" id="RHEA:60129"/>
    </physiologicalReaction>
</comment>
<comment type="catalytic activity">
    <reaction evidence="3">
        <text>daunorubicin(in) + ATP + H2O = daunorubicin(out) + ADP + phosphate + H(+)</text>
        <dbReference type="Rhea" id="RHEA:33147"/>
        <dbReference type="ChEBI" id="CHEBI:15377"/>
        <dbReference type="ChEBI" id="CHEBI:15378"/>
        <dbReference type="ChEBI" id="CHEBI:30616"/>
        <dbReference type="ChEBI" id="CHEBI:43474"/>
        <dbReference type="ChEBI" id="CHEBI:64677"/>
        <dbReference type="ChEBI" id="CHEBI:456216"/>
    </reaction>
    <physiologicalReaction direction="left-to-right" evidence="3">
        <dbReference type="Rhea" id="RHEA:33148"/>
    </physiologicalReaction>
</comment>
<comment type="catalytic activity">
    <reaction evidence="3">
        <text>vincristine(in) + ATP + H2O = vincristine(out) + ADP + phosphate + H(+)</text>
        <dbReference type="Rhea" id="RHEA:60160"/>
        <dbReference type="ChEBI" id="CHEBI:15377"/>
        <dbReference type="ChEBI" id="CHEBI:15378"/>
        <dbReference type="ChEBI" id="CHEBI:30616"/>
        <dbReference type="ChEBI" id="CHEBI:43474"/>
        <dbReference type="ChEBI" id="CHEBI:143658"/>
        <dbReference type="ChEBI" id="CHEBI:456216"/>
    </reaction>
    <physiologicalReaction direction="left-to-right" evidence="3">
        <dbReference type="Rhea" id="RHEA:60161"/>
    </physiologicalReaction>
</comment>
<comment type="catalytic activity">
    <reaction evidence="3">
        <text>2',3'-cGAMP(in) + ATP + H2O = 2',3'-cGAMP(out) + ADP + phosphate + H(+)</text>
        <dbReference type="Rhea" id="RHEA:74887"/>
        <dbReference type="ChEBI" id="CHEBI:15377"/>
        <dbReference type="ChEBI" id="CHEBI:15378"/>
        <dbReference type="ChEBI" id="CHEBI:30616"/>
        <dbReference type="ChEBI" id="CHEBI:43474"/>
        <dbReference type="ChEBI" id="CHEBI:143093"/>
        <dbReference type="ChEBI" id="CHEBI:456216"/>
    </reaction>
</comment>
<comment type="catalytic activity">
    <reaction evidence="2">
        <text>S-[(2E,6E,10E)-geranylgeranyl]-L-glutathione(in) + ATP + H2O = S-[(2E,6E,10E)-geranylgeranyl]-L-glutathione(out) + ADP + phosphate + H(+)</text>
        <dbReference type="Rhea" id="RHEA:81611"/>
        <dbReference type="ChEBI" id="CHEBI:15377"/>
        <dbReference type="ChEBI" id="CHEBI:15378"/>
        <dbReference type="ChEBI" id="CHEBI:30616"/>
        <dbReference type="ChEBI" id="CHEBI:43474"/>
        <dbReference type="ChEBI" id="CHEBI:156326"/>
        <dbReference type="ChEBI" id="CHEBI:456216"/>
    </reaction>
    <physiologicalReaction direction="left-to-right" evidence="2">
        <dbReference type="Rhea" id="RHEA:81612"/>
    </physiologicalReaction>
</comment>
<comment type="catalytic activity">
    <reaction evidence="3">
        <text>prostaglandin A2-S-(R)-glutathione(in) + ATP + H2O = prostaglandin A2-S-(R)-glutathione(out) + ADP + phosphate + H(+)</text>
        <dbReference type="Rhea" id="RHEA:81695"/>
        <dbReference type="ChEBI" id="CHEBI:15377"/>
        <dbReference type="ChEBI" id="CHEBI:15378"/>
        <dbReference type="ChEBI" id="CHEBI:30616"/>
        <dbReference type="ChEBI" id="CHEBI:43474"/>
        <dbReference type="ChEBI" id="CHEBI:133768"/>
        <dbReference type="ChEBI" id="CHEBI:456216"/>
    </reaction>
    <physiologicalReaction direction="left-to-right" evidence="3">
        <dbReference type="Rhea" id="RHEA:81696"/>
    </physiologicalReaction>
</comment>
<comment type="catalytic activity">
    <reaction evidence="3">
        <text>prostaglandin A2-S-(S)-glutathione(in) + ATP + H2O = prostaglandin A2-S-(S)-glutathione(out) + ADP + phosphate + H(+)</text>
        <dbReference type="Rhea" id="RHEA:81699"/>
        <dbReference type="ChEBI" id="CHEBI:15377"/>
        <dbReference type="ChEBI" id="CHEBI:15378"/>
        <dbReference type="ChEBI" id="CHEBI:30616"/>
        <dbReference type="ChEBI" id="CHEBI:43474"/>
        <dbReference type="ChEBI" id="CHEBI:133769"/>
        <dbReference type="ChEBI" id="CHEBI:456216"/>
    </reaction>
    <physiologicalReaction direction="left-to-right" evidence="3">
        <dbReference type="Rhea" id="RHEA:81700"/>
    </physiologicalReaction>
</comment>
<comment type="activity regulation">
    <text evidence="3">MK 571 inhibits sphingosine 1-phosphate and leukotriene C4 export.</text>
</comment>
<comment type="subcellular location">
    <subcellularLocation>
        <location evidence="3">Cell membrane</location>
        <topology evidence="4">Multi-pass membrane protein</topology>
    </subcellularLocation>
    <subcellularLocation>
        <location evidence="3">Basolateral cell membrane</location>
        <topology evidence="4">Multi-pass membrane protein</topology>
    </subcellularLocation>
</comment>
<comment type="tissue specificity">
    <text evidence="8">Expressed in heart, spleen, lung, kidney, skeletal muscle, mammary gland and weaker in brain and liver.</text>
</comment>
<comment type="similarity">
    <text evidence="9">Belongs to the ABC transporter superfamily. ABCC family. Conjugate transporter (TC 3.A.1.208) subfamily.</text>
</comment>
<proteinExistence type="evidence at protein level"/>
<protein>
    <recommendedName>
        <fullName evidence="3">Multidrug resistance-associated protein 1</fullName>
        <ecNumber evidence="8">7.6.2.2</ecNumber>
    </recommendedName>
    <alternativeName>
        <fullName>ATP-binding cassette sub-family C member 1</fullName>
    </alternativeName>
    <alternativeName>
        <fullName evidence="2">Glutathione-S-conjugate-translocating ATPase ABCC1</fullName>
        <ecNumber evidence="2">7.6.2.3</ecNumber>
    </alternativeName>
    <alternativeName>
        <fullName>Leukotriene C(4) transporter</fullName>
        <shortName>LTC4 transporter</shortName>
    </alternativeName>
</protein>
<reference key="1">
    <citation type="journal article" date="2002" name="FEBS Lett.">
        <title>Functional analysis of MRP1 cloned from bovine.</title>
        <authorList>
            <person name="Taguchi Y."/>
            <person name="Saeki K."/>
            <person name="Komano T."/>
        </authorList>
    </citation>
    <scope>NUCLEOTIDE SEQUENCE [MRNA]</scope>
    <scope>FUNCTION</scope>
    <scope>TISSUE SPECIFICITY</scope>
    <scope>CATALYTIC ACTIVITY</scope>
    <source>
        <tissue>Mammary gland</tissue>
    </source>
</reference>
<keyword id="KW-0002">3D-structure</keyword>
<keyword id="KW-0067">ATP-binding</keyword>
<keyword id="KW-1003">Cell membrane</keyword>
<keyword id="KW-0325">Glycoprotein</keyword>
<keyword id="KW-0378">Hydrolase</keyword>
<keyword id="KW-0445">Lipid transport</keyword>
<keyword id="KW-0472">Membrane</keyword>
<keyword id="KW-0547">Nucleotide-binding</keyword>
<keyword id="KW-0597">Phosphoprotein</keyword>
<keyword id="KW-1185">Reference proteome</keyword>
<keyword id="KW-0677">Repeat</keyword>
<keyword id="KW-1278">Translocase</keyword>
<keyword id="KW-0812">Transmembrane</keyword>
<keyword id="KW-1133">Transmembrane helix</keyword>
<keyword id="KW-0813">Transport</keyword>
<gene>
    <name evidence="3" type="primary">ABCC1</name>
    <name type="synonym">MRP1</name>
</gene>
<accession>Q8HXQ5</accession>
<feature type="chain" id="PRO_0000093349" description="Multidrug resistance-associated protein 1">
    <location>
        <begin position="1"/>
        <end position="1530"/>
    </location>
</feature>
<feature type="topological domain" description="Extracellular" evidence="1">
    <location>
        <begin position="1"/>
        <end position="33"/>
    </location>
</feature>
<feature type="transmembrane region" description="Helical; Name=1" evidence="6">
    <location>
        <begin position="34"/>
        <end position="54"/>
    </location>
</feature>
<feature type="topological domain" description="Cytoplasmic" evidence="1">
    <location>
        <begin position="55"/>
        <end position="74"/>
    </location>
</feature>
<feature type="transmembrane region" description="Helical; Name=2" evidence="6">
    <location>
        <begin position="75"/>
        <end position="95"/>
    </location>
</feature>
<feature type="topological domain" description="Extracellular" evidence="1">
    <location>
        <begin position="96"/>
        <end position="100"/>
    </location>
</feature>
<feature type="transmembrane region" description="Helical; Name=3" evidence="6">
    <location>
        <begin position="101"/>
        <end position="121"/>
    </location>
</feature>
<feature type="topological domain" description="Cytoplasmic" evidence="1">
    <location>
        <begin position="122"/>
        <end position="133"/>
    </location>
</feature>
<feature type="transmembrane region" description="Helical; Name=4" evidence="6">
    <location>
        <begin position="134"/>
        <end position="154"/>
    </location>
</feature>
<feature type="topological domain" description="Extracellular" evidence="1">
    <location>
        <begin position="155"/>
        <end position="172"/>
    </location>
</feature>
<feature type="transmembrane region" description="Helical; Name=5" evidence="6">
    <location>
        <begin position="173"/>
        <end position="193"/>
    </location>
</feature>
<feature type="topological domain" description="Cytoplasmic" evidence="1">
    <location>
        <begin position="194"/>
        <end position="316"/>
    </location>
</feature>
<feature type="transmembrane region" description="Helical; Name=6" evidence="6">
    <location>
        <begin position="317"/>
        <end position="337"/>
    </location>
</feature>
<feature type="topological domain" description="Extracellular" evidence="1">
    <location>
        <begin position="338"/>
        <end position="363"/>
    </location>
</feature>
<feature type="transmembrane region" description="Helical; Name=7" evidence="6">
    <location>
        <begin position="364"/>
        <end position="384"/>
    </location>
</feature>
<feature type="topological domain" description="Cytoplasmic" evidence="1">
    <location>
        <begin position="385"/>
        <end position="440"/>
    </location>
</feature>
<feature type="transmembrane region" description="Helical; Name=8" evidence="6">
    <location>
        <begin position="441"/>
        <end position="461"/>
    </location>
</feature>
<feature type="topological domain" description="Extracellular" evidence="1">
    <location>
        <begin position="462"/>
        <end position="464"/>
    </location>
</feature>
<feature type="transmembrane region" description="Helical; Name=9" evidence="6">
    <location>
        <begin position="465"/>
        <end position="485"/>
    </location>
</feature>
<feature type="topological domain" description="Cytoplasmic" evidence="1">
    <location>
        <begin position="486"/>
        <end position="547"/>
    </location>
</feature>
<feature type="transmembrane region" description="Helical; Name=10" evidence="6">
    <location>
        <begin position="548"/>
        <end position="568"/>
    </location>
</feature>
<feature type="topological domain" description="Extracellular" evidence="1">
    <location>
        <begin position="569"/>
        <end position="590"/>
    </location>
</feature>
<feature type="transmembrane region" description="Helical; Name=11" evidence="6">
    <location>
        <begin position="591"/>
        <end position="611"/>
    </location>
</feature>
<feature type="topological domain" description="Cytoplasmic" evidence="1">
    <location>
        <begin position="612"/>
        <end position="966"/>
    </location>
</feature>
<feature type="transmembrane region" description="Helical; Name=12" evidence="6">
    <location>
        <begin position="967"/>
        <end position="987"/>
    </location>
</feature>
<feature type="topological domain" description="Extracellular" evidence="1">
    <location>
        <begin position="988"/>
        <end position="1024"/>
    </location>
</feature>
<feature type="transmembrane region" description="Helical; Name=13" evidence="6">
    <location>
        <begin position="1025"/>
        <end position="1045"/>
    </location>
</feature>
<feature type="topological domain" description="Cytoplasmic" evidence="1">
    <location>
        <begin position="1046"/>
        <end position="1088"/>
    </location>
</feature>
<feature type="transmembrane region" description="Helical; Name=14" evidence="6">
    <location>
        <begin position="1089"/>
        <end position="1109"/>
    </location>
</feature>
<feature type="topological domain" description="Extracellular" evidence="1">
    <location>
        <position position="1110"/>
    </location>
</feature>
<feature type="transmembrane region" description="Helical; Name=15" evidence="6">
    <location>
        <begin position="1111"/>
        <end position="1131"/>
    </location>
</feature>
<feature type="topological domain" description="Cytoplasmic" evidence="1">
    <location>
        <begin position="1132"/>
        <end position="1202"/>
    </location>
</feature>
<feature type="transmembrane region" description="Helical; Name=16" evidence="6">
    <location>
        <begin position="1203"/>
        <end position="1223"/>
    </location>
</feature>
<feature type="topological domain" description="Extracellular" evidence="1">
    <location>
        <begin position="1224"/>
        <end position="1225"/>
    </location>
</feature>
<feature type="transmembrane region" description="Helical; Name=17" evidence="6">
    <location>
        <begin position="1226"/>
        <end position="1246"/>
    </location>
</feature>
<feature type="topological domain" description="Cytoplasmic" evidence="1">
    <location>
        <begin position="1247"/>
        <end position="1530"/>
    </location>
</feature>
<feature type="domain" description="ABC transmembrane type-1 1" evidence="6">
    <location>
        <begin position="325"/>
        <end position="608"/>
    </location>
</feature>
<feature type="domain" description="ABC transporter 1" evidence="5">
    <location>
        <begin position="644"/>
        <end position="868"/>
    </location>
</feature>
<feature type="domain" description="ABC transmembrane type-1 2" evidence="6">
    <location>
        <begin position="974"/>
        <end position="1255"/>
    </location>
</feature>
<feature type="domain" description="ABC transporter 2" evidence="5">
    <location>
        <begin position="1292"/>
        <end position="1526"/>
    </location>
</feature>
<feature type="region of interest" description="Disordered" evidence="7">
    <location>
        <begin position="912"/>
        <end position="939"/>
    </location>
</feature>
<feature type="binding site" evidence="5">
    <location>
        <begin position="678"/>
        <end position="685"/>
    </location>
    <ligand>
        <name>ATP</name>
        <dbReference type="ChEBI" id="CHEBI:30616"/>
        <label>1</label>
    </ligand>
</feature>
<feature type="binding site" evidence="5">
    <location>
        <begin position="1326"/>
        <end position="1333"/>
    </location>
    <ligand>
        <name>ATP</name>
        <dbReference type="ChEBI" id="CHEBI:30616"/>
        <label>2</label>
    </ligand>
</feature>
<feature type="modified residue" description="Phosphotyrosine" evidence="2">
    <location>
        <position position="277"/>
    </location>
</feature>
<feature type="modified residue" description="Phosphoserine" evidence="2">
    <location>
        <position position="289"/>
    </location>
</feature>
<feature type="modified residue" description="N6-succinyllysine" evidence="2">
    <location>
        <position position="503"/>
    </location>
</feature>
<feature type="modified residue" description="Phosphoserine" evidence="3">
    <location>
        <position position="915"/>
    </location>
</feature>
<feature type="modified residue" description="Phosphoserine" evidence="3">
    <location>
        <position position="930"/>
    </location>
</feature>
<feature type="glycosylation site" description="N-linked (GlcNAc...) asparagine" evidence="4">
    <location>
        <position position="19"/>
    </location>
</feature>
<feature type="glycosylation site" description="N-linked (GlcNAc...) asparagine" evidence="4">
    <location>
        <position position="1005"/>
    </location>
</feature>
<feature type="strand" evidence="12">
    <location>
        <begin position="205"/>
        <end position="207"/>
    </location>
</feature>
<feature type="turn" evidence="11">
    <location>
        <begin position="209"/>
        <end position="212"/>
    </location>
</feature>
<feature type="helix" evidence="11">
    <location>
        <begin position="215"/>
        <end position="220"/>
    </location>
</feature>
<feature type="helix" evidence="12">
    <location>
        <begin position="222"/>
        <end position="224"/>
    </location>
</feature>
<feature type="helix" evidence="11">
    <location>
        <begin position="225"/>
        <end position="233"/>
    </location>
</feature>
<feature type="helix" evidence="11">
    <location>
        <begin position="238"/>
        <end position="240"/>
    </location>
</feature>
<feature type="strand" evidence="11">
    <location>
        <begin position="246"/>
        <end position="249"/>
    </location>
</feature>
<feature type="helix" evidence="11">
    <location>
        <begin position="250"/>
        <end position="267"/>
    </location>
</feature>
<feature type="helix" evidence="11">
    <location>
        <begin position="316"/>
        <end position="319"/>
    </location>
</feature>
<feature type="helix" evidence="11">
    <location>
        <begin position="322"/>
        <end position="325"/>
    </location>
</feature>
<feature type="helix" evidence="11">
    <location>
        <begin position="328"/>
        <end position="354"/>
    </location>
</feature>
<feature type="strand" evidence="11">
    <location>
        <begin position="356"/>
        <end position="358"/>
    </location>
</feature>
<feature type="helix" evidence="11">
    <location>
        <begin position="361"/>
        <end position="407"/>
    </location>
</feature>
<feature type="helix" evidence="11">
    <location>
        <begin position="412"/>
        <end position="417"/>
    </location>
</feature>
<feature type="helix" evidence="11">
    <location>
        <begin position="420"/>
        <end position="440"/>
    </location>
</feature>
<feature type="helix" evidence="11">
    <location>
        <begin position="443"/>
        <end position="461"/>
    </location>
</feature>
<feature type="turn" evidence="12">
    <location>
        <begin position="464"/>
        <end position="466"/>
    </location>
</feature>
<feature type="helix" evidence="11">
    <location>
        <begin position="467"/>
        <end position="509"/>
    </location>
</feature>
<feature type="helix" evidence="11">
    <location>
        <begin position="512"/>
        <end position="518"/>
    </location>
</feature>
<feature type="helix" evidence="11">
    <location>
        <begin position="521"/>
        <end position="554"/>
    </location>
</feature>
<feature type="helix" evidence="11">
    <location>
        <begin position="556"/>
        <end position="570"/>
    </location>
</feature>
<feature type="helix" evidence="11">
    <location>
        <begin position="580"/>
        <end position="589"/>
    </location>
</feature>
<feature type="turn" evidence="11">
    <location>
        <begin position="590"/>
        <end position="592"/>
    </location>
</feature>
<feature type="helix" evidence="11">
    <location>
        <begin position="593"/>
        <end position="597"/>
    </location>
</feature>
<feature type="helix" evidence="11">
    <location>
        <begin position="599"/>
        <end position="620"/>
    </location>
</feature>
<feature type="helix" evidence="11">
    <location>
        <begin position="627"/>
        <end position="629"/>
    </location>
</feature>
<feature type="strand" evidence="11">
    <location>
        <begin position="642"/>
        <end position="657"/>
    </location>
</feature>
<feature type="strand" evidence="11">
    <location>
        <begin position="663"/>
        <end position="671"/>
    </location>
</feature>
<feature type="strand" evidence="11">
    <location>
        <begin position="673"/>
        <end position="679"/>
    </location>
</feature>
<feature type="helix" evidence="11">
    <location>
        <begin position="684"/>
        <end position="690"/>
    </location>
</feature>
<feature type="turn" evidence="11">
    <location>
        <begin position="691"/>
        <end position="693"/>
    </location>
</feature>
<feature type="strand" evidence="11">
    <location>
        <begin position="695"/>
        <end position="706"/>
    </location>
</feature>
<feature type="strand" evidence="11">
    <location>
        <begin position="708"/>
        <end position="711"/>
    </location>
</feature>
<feature type="strand" evidence="11">
    <location>
        <begin position="719"/>
        <end position="721"/>
    </location>
</feature>
<feature type="helix" evidence="11">
    <location>
        <begin position="722"/>
        <end position="727"/>
    </location>
</feature>
<feature type="helix" evidence="11">
    <location>
        <begin position="734"/>
        <end position="743"/>
    </location>
</feature>
<feature type="helix" evidence="11">
    <location>
        <begin position="747"/>
        <end position="752"/>
    </location>
</feature>
<feature type="strand" evidence="11">
    <location>
        <begin position="753"/>
        <end position="755"/>
    </location>
</feature>
<feature type="strand" evidence="11">
    <location>
        <begin position="763"/>
        <end position="768"/>
    </location>
</feature>
<feature type="helix" evidence="11">
    <location>
        <begin position="770"/>
        <end position="784"/>
    </location>
</feature>
<feature type="strand" evidence="11">
    <location>
        <begin position="787"/>
        <end position="792"/>
    </location>
</feature>
<feature type="strand" evidence="11">
    <location>
        <begin position="795"/>
        <end position="798"/>
    </location>
</feature>
<feature type="helix" evidence="11">
    <location>
        <begin position="800"/>
        <end position="809"/>
    </location>
</feature>
<feature type="strand" evidence="10">
    <location>
        <begin position="812"/>
        <end position="816"/>
    </location>
</feature>
<feature type="strand" evidence="11">
    <location>
        <begin position="818"/>
        <end position="825"/>
    </location>
</feature>
<feature type="strand" evidence="12">
    <location>
        <begin position="829"/>
        <end position="831"/>
    </location>
</feature>
<feature type="helix" evidence="11">
    <location>
        <begin position="832"/>
        <end position="834"/>
    </location>
</feature>
<feature type="strand" evidence="11">
    <location>
        <begin position="835"/>
        <end position="842"/>
    </location>
</feature>
<feature type="strand" evidence="11">
    <location>
        <begin position="845"/>
        <end position="848"/>
    </location>
</feature>
<feature type="helix" evidence="11">
    <location>
        <begin position="852"/>
        <end position="858"/>
    </location>
</feature>
<feature type="helix" evidence="11">
    <location>
        <begin position="861"/>
        <end position="865"/>
    </location>
</feature>
<feature type="helix" evidence="11">
    <location>
        <begin position="959"/>
        <end position="969"/>
    </location>
</feature>
<feature type="helix" evidence="11">
    <location>
        <begin position="971"/>
        <end position="999"/>
    </location>
</feature>
<feature type="strand" evidence="13">
    <location>
        <begin position="1004"/>
        <end position="1007"/>
    </location>
</feature>
<feature type="helix" evidence="11">
    <location>
        <begin position="1008"/>
        <end position="1057"/>
    </location>
</feature>
<feature type="helix" evidence="11">
    <location>
        <begin position="1060"/>
        <end position="1065"/>
    </location>
</feature>
<feature type="helix" evidence="11">
    <location>
        <begin position="1068"/>
        <end position="1109"/>
    </location>
</feature>
<feature type="helix" evidence="12">
    <location>
        <begin position="1112"/>
        <end position="1114"/>
    </location>
</feature>
<feature type="turn" evidence="12">
    <location>
        <begin position="1115"/>
        <end position="1117"/>
    </location>
</feature>
<feature type="helix" evidence="11">
    <location>
        <begin position="1118"/>
        <end position="1146"/>
    </location>
</feature>
<feature type="helix" evidence="11">
    <location>
        <begin position="1148"/>
        <end position="1159"/>
    </location>
</feature>
<feature type="helix" evidence="11">
    <location>
        <begin position="1161"/>
        <end position="1167"/>
    </location>
</feature>
<feature type="helix" evidence="11">
    <location>
        <begin position="1170"/>
        <end position="1219"/>
    </location>
</feature>
<feature type="strand" evidence="11">
    <location>
        <begin position="1221"/>
        <end position="1224"/>
    </location>
</feature>
<feature type="helix" evidence="11">
    <location>
        <begin position="1226"/>
        <end position="1256"/>
    </location>
</feature>
<feature type="helix" evidence="11">
    <location>
        <begin position="1258"/>
        <end position="1263"/>
    </location>
</feature>
<feature type="helix" evidence="11">
    <location>
        <begin position="1264"/>
        <end position="1266"/>
    </location>
</feature>
<feature type="strand" evidence="12">
    <location>
        <begin position="1267"/>
        <end position="1269"/>
    </location>
</feature>
<feature type="strand" evidence="12">
    <location>
        <begin position="1278"/>
        <end position="1280"/>
    </location>
</feature>
<feature type="helix" evidence="13">
    <location>
        <begin position="1286"/>
        <end position="1288"/>
    </location>
</feature>
<feature type="strand" evidence="11">
    <location>
        <begin position="1292"/>
        <end position="1298"/>
    </location>
</feature>
<feature type="strand" evidence="12">
    <location>
        <begin position="1301"/>
        <end position="1305"/>
    </location>
</feature>
<feature type="strand" evidence="12">
    <location>
        <begin position="1308"/>
        <end position="1316"/>
    </location>
</feature>
<feature type="strand" evidence="11">
    <location>
        <begin position="1322"/>
        <end position="1326"/>
    </location>
</feature>
<feature type="strand" evidence="11">
    <location>
        <begin position="1330"/>
        <end position="1332"/>
    </location>
</feature>
<feature type="helix" evidence="11">
    <location>
        <begin position="1333"/>
        <end position="1339"/>
    </location>
</feature>
<feature type="strand" evidence="11">
    <location>
        <begin position="1346"/>
        <end position="1354"/>
    </location>
</feature>
<feature type="turn" evidence="13">
    <location>
        <begin position="1357"/>
        <end position="1359"/>
    </location>
</feature>
<feature type="helix" evidence="11">
    <location>
        <begin position="1362"/>
        <end position="1366"/>
    </location>
</feature>
<feature type="strand" evidence="11">
    <location>
        <begin position="1368"/>
        <end position="1372"/>
    </location>
</feature>
<feature type="strand" evidence="11">
    <location>
        <begin position="1380"/>
        <end position="1382"/>
    </location>
</feature>
<feature type="helix" evidence="11">
    <location>
        <begin position="1383"/>
        <end position="1387"/>
    </location>
</feature>
<feature type="helix" evidence="11">
    <location>
        <begin position="1395"/>
        <end position="1404"/>
    </location>
</feature>
<feature type="helix" evidence="11">
    <location>
        <begin position="1408"/>
        <end position="1413"/>
    </location>
</feature>
<feature type="strand" evidence="11">
    <location>
        <begin position="1414"/>
        <end position="1418"/>
    </location>
</feature>
<feature type="turn" evidence="11">
    <location>
        <begin position="1424"/>
        <end position="1427"/>
    </location>
</feature>
<feature type="helix" evidence="11">
    <location>
        <begin position="1431"/>
        <end position="1445"/>
    </location>
</feature>
<feature type="strand" evidence="11">
    <location>
        <begin position="1448"/>
        <end position="1454"/>
    </location>
</feature>
<feature type="strand" evidence="11">
    <location>
        <begin position="1457"/>
        <end position="1459"/>
    </location>
</feature>
<feature type="helix" evidence="11">
    <location>
        <begin position="1461"/>
        <end position="1474"/>
    </location>
</feature>
<feature type="strand" evidence="11">
    <location>
        <begin position="1475"/>
        <end position="1483"/>
    </location>
</feature>
<feature type="helix" evidence="11">
    <location>
        <begin position="1487"/>
        <end position="1490"/>
    </location>
</feature>
<feature type="strand" evidence="11">
    <location>
        <begin position="1493"/>
        <end position="1504"/>
    </location>
</feature>
<feature type="strand" evidence="13">
    <location>
        <begin position="1506"/>
        <end position="1508"/>
    </location>
</feature>
<feature type="helix" evidence="11">
    <location>
        <begin position="1510"/>
        <end position="1516"/>
    </location>
</feature>
<feature type="helix" evidence="11">
    <location>
        <begin position="1519"/>
        <end position="1527"/>
    </location>
</feature>
<name>MRP1_BOVIN</name>
<organism>
    <name type="scientific">Bos taurus</name>
    <name type="common">Bovine</name>
    <dbReference type="NCBI Taxonomy" id="9913"/>
    <lineage>
        <taxon>Eukaryota</taxon>
        <taxon>Metazoa</taxon>
        <taxon>Chordata</taxon>
        <taxon>Craniata</taxon>
        <taxon>Vertebrata</taxon>
        <taxon>Euteleostomi</taxon>
        <taxon>Mammalia</taxon>
        <taxon>Eutheria</taxon>
        <taxon>Laurasiatheria</taxon>
        <taxon>Artiodactyla</taxon>
        <taxon>Ruminantia</taxon>
        <taxon>Pecora</taxon>
        <taxon>Bovidae</taxon>
        <taxon>Bovinae</taxon>
        <taxon>Bos</taxon>
    </lineage>
</organism>
<evidence type="ECO:0000250" key="1"/>
<evidence type="ECO:0000250" key="2">
    <source>
        <dbReference type="UniProtKB" id="O35379"/>
    </source>
</evidence>
<evidence type="ECO:0000250" key="3">
    <source>
        <dbReference type="UniProtKB" id="P33527"/>
    </source>
</evidence>
<evidence type="ECO:0000255" key="4"/>
<evidence type="ECO:0000255" key="5">
    <source>
        <dbReference type="PROSITE-ProRule" id="PRU00434"/>
    </source>
</evidence>
<evidence type="ECO:0000255" key="6">
    <source>
        <dbReference type="PROSITE-ProRule" id="PRU00441"/>
    </source>
</evidence>
<evidence type="ECO:0000256" key="7">
    <source>
        <dbReference type="SAM" id="MobiDB-lite"/>
    </source>
</evidence>
<evidence type="ECO:0000269" key="8">
    <source>
    </source>
</evidence>
<evidence type="ECO:0000305" key="9"/>
<evidence type="ECO:0007829" key="10">
    <source>
        <dbReference type="PDB" id="5UJA"/>
    </source>
</evidence>
<evidence type="ECO:0007829" key="11">
    <source>
        <dbReference type="PDB" id="6BHU"/>
    </source>
</evidence>
<evidence type="ECO:0007829" key="12">
    <source>
        <dbReference type="PDB" id="6UY0"/>
    </source>
</evidence>
<evidence type="ECO:0007829" key="13">
    <source>
        <dbReference type="PDB" id="8F4B"/>
    </source>
</evidence>
<dbReference type="EC" id="7.6.2.2" evidence="8"/>
<dbReference type="EC" id="7.6.2.3" evidence="2"/>
<dbReference type="EMBL" id="AB082124">
    <property type="protein sequence ID" value="BAC15550.1"/>
    <property type="molecule type" value="mRNA"/>
</dbReference>
<dbReference type="RefSeq" id="NP_776648.1">
    <property type="nucleotide sequence ID" value="NM_174223.1"/>
</dbReference>
<dbReference type="PDB" id="5UJ9">
    <property type="method" value="EM"/>
    <property type="resolution" value="3.49 A"/>
    <property type="chains" value="A=205-1530"/>
</dbReference>
<dbReference type="PDB" id="5UJA">
    <property type="method" value="EM"/>
    <property type="resolution" value="3.34 A"/>
    <property type="chains" value="A=205-1530"/>
</dbReference>
<dbReference type="PDB" id="6BHU">
    <property type="method" value="EM"/>
    <property type="resolution" value="3.14 A"/>
    <property type="chains" value="A=1-1530"/>
</dbReference>
<dbReference type="PDB" id="6UY0">
    <property type="method" value="EM"/>
    <property type="resolution" value="3.23 A"/>
    <property type="chains" value="A=1-1530"/>
</dbReference>
<dbReference type="PDB" id="8F4B">
    <property type="method" value="EM"/>
    <property type="resolution" value="3.27 A"/>
    <property type="chains" value="A=205-1530"/>
</dbReference>
<dbReference type="PDBsum" id="5UJ9"/>
<dbReference type="PDBsum" id="5UJA"/>
<dbReference type="PDBsum" id="6BHU"/>
<dbReference type="PDBsum" id="6UY0"/>
<dbReference type="PDBsum" id="8F4B"/>
<dbReference type="EMDB" id="EMD-20945"/>
<dbReference type="EMDB" id="EMD-28854"/>
<dbReference type="EMDB" id="EMD-7099"/>
<dbReference type="EMDB" id="EMD-8559"/>
<dbReference type="EMDB" id="EMD-8560"/>
<dbReference type="SMR" id="Q8HXQ5"/>
<dbReference type="FunCoup" id="Q8HXQ5">
    <property type="interactions" value="1657"/>
</dbReference>
<dbReference type="STRING" id="9913.ENSBTAP00000028094"/>
<dbReference type="GlyCosmos" id="Q8HXQ5">
    <property type="glycosylation" value="2 sites, No reported glycans"/>
</dbReference>
<dbReference type="GlyGen" id="Q8HXQ5">
    <property type="glycosylation" value="2 sites"/>
</dbReference>
<dbReference type="PaxDb" id="9913-ENSBTAP00000028094"/>
<dbReference type="GeneID" id="281588"/>
<dbReference type="KEGG" id="bta:281588"/>
<dbReference type="CTD" id="4363"/>
<dbReference type="VEuPathDB" id="HostDB:ENSBTAG00000021090"/>
<dbReference type="eggNOG" id="KOG0054">
    <property type="taxonomic scope" value="Eukaryota"/>
</dbReference>
<dbReference type="InParanoid" id="Q8HXQ5"/>
<dbReference type="OMA" id="CFETGMR"/>
<dbReference type="OrthoDB" id="6500128at2759"/>
<dbReference type="BRENDA" id="7.6.2.2">
    <property type="organism ID" value="908"/>
</dbReference>
<dbReference type="Reactome" id="R-BTA-1660661">
    <property type="pathway name" value="Sphingolipid de novo biosynthesis"/>
</dbReference>
<dbReference type="Reactome" id="R-BTA-189483">
    <property type="pathway name" value="Heme degradation"/>
</dbReference>
<dbReference type="Reactome" id="R-BTA-2142691">
    <property type="pathway name" value="Synthesis of Leukotrienes (LT) and Eoxins (EX)"/>
</dbReference>
<dbReference type="Reactome" id="R-BTA-382556">
    <property type="pathway name" value="ABC-family proteins mediated transport"/>
</dbReference>
<dbReference type="Reactome" id="R-BTA-9707564">
    <property type="pathway name" value="Cytoprotection by HMOX1"/>
</dbReference>
<dbReference type="Reactome" id="R-BTA-9753281">
    <property type="pathway name" value="Paracetamol ADME"/>
</dbReference>
<dbReference type="Reactome" id="R-BTA-9758890">
    <property type="pathway name" value="Transport of RCbl within the body"/>
</dbReference>
<dbReference type="Proteomes" id="UP000009136">
    <property type="component" value="Chromosome 25"/>
</dbReference>
<dbReference type="Bgee" id="ENSBTAG00000021090">
    <property type="expression patterns" value="Expressed in corpus epididymis and 109 other cell types or tissues"/>
</dbReference>
<dbReference type="GO" id="GO:0016323">
    <property type="term" value="C:basolateral plasma membrane"/>
    <property type="evidence" value="ECO:0000318"/>
    <property type="project" value="GO_Central"/>
</dbReference>
<dbReference type="GO" id="GO:0015431">
    <property type="term" value="F:ABC-type glutathione S-conjugate transporter activity"/>
    <property type="evidence" value="ECO:0000250"/>
    <property type="project" value="UniProtKB"/>
</dbReference>
<dbReference type="GO" id="GO:0140359">
    <property type="term" value="F:ABC-type transporter activity"/>
    <property type="evidence" value="ECO:0000250"/>
    <property type="project" value="UniProtKB"/>
</dbReference>
<dbReference type="GO" id="GO:0008559">
    <property type="term" value="F:ABC-type xenobiotic transporter activity"/>
    <property type="evidence" value="ECO:0000318"/>
    <property type="project" value="GO_Central"/>
</dbReference>
<dbReference type="GO" id="GO:0005524">
    <property type="term" value="F:ATP binding"/>
    <property type="evidence" value="ECO:0007669"/>
    <property type="project" value="UniProtKB-KW"/>
</dbReference>
<dbReference type="GO" id="GO:0016887">
    <property type="term" value="F:ATP hydrolysis activity"/>
    <property type="evidence" value="ECO:0007669"/>
    <property type="project" value="InterPro"/>
</dbReference>
<dbReference type="GO" id="GO:0034634">
    <property type="term" value="F:glutathione transmembrane transporter activity"/>
    <property type="evidence" value="ECO:0000318"/>
    <property type="project" value="GO_Central"/>
</dbReference>
<dbReference type="GO" id="GO:0042910">
    <property type="term" value="F:xenobiotic transmembrane transporter activity"/>
    <property type="evidence" value="ECO:0000250"/>
    <property type="project" value="UniProtKB"/>
</dbReference>
<dbReference type="GO" id="GO:0070729">
    <property type="term" value="P:cyclic nucleotide transport"/>
    <property type="evidence" value="ECO:0000250"/>
    <property type="project" value="UniProtKB"/>
</dbReference>
<dbReference type="GO" id="GO:0034775">
    <property type="term" value="P:glutathione transmembrane transport"/>
    <property type="evidence" value="ECO:0000318"/>
    <property type="project" value="GO_Central"/>
</dbReference>
<dbReference type="GO" id="GO:0071716">
    <property type="term" value="P:leukotriene transport"/>
    <property type="evidence" value="ECO:0000250"/>
    <property type="project" value="UniProtKB"/>
</dbReference>
<dbReference type="GO" id="GO:0006869">
    <property type="term" value="P:lipid transport"/>
    <property type="evidence" value="ECO:0007669"/>
    <property type="project" value="UniProtKB-KW"/>
</dbReference>
<dbReference type="GO" id="GO:0050729">
    <property type="term" value="P:positive regulation of inflammatory response"/>
    <property type="evidence" value="ECO:0000250"/>
    <property type="project" value="UniProtKB"/>
</dbReference>
<dbReference type="GO" id="GO:0009410">
    <property type="term" value="P:response to xenobiotic stimulus"/>
    <property type="evidence" value="ECO:0000250"/>
    <property type="project" value="UniProtKB"/>
</dbReference>
<dbReference type="GO" id="GO:0042908">
    <property type="term" value="P:xenobiotic transport"/>
    <property type="evidence" value="ECO:0000318"/>
    <property type="project" value="GO_Central"/>
</dbReference>
<dbReference type="CDD" id="cd18595">
    <property type="entry name" value="ABC_6TM_MRP1_2_3_6_D1_like"/>
    <property type="match status" value="1"/>
</dbReference>
<dbReference type="CDD" id="cd18603">
    <property type="entry name" value="ABC_6TM_MRP1_2_3_6_D2_like"/>
    <property type="match status" value="1"/>
</dbReference>
<dbReference type="CDD" id="cd03250">
    <property type="entry name" value="ABCC_MRP_domain1"/>
    <property type="match status" value="1"/>
</dbReference>
<dbReference type="CDD" id="cd03244">
    <property type="entry name" value="ABCC_MRP_domain2"/>
    <property type="match status" value="1"/>
</dbReference>
<dbReference type="FunFam" id="3.40.50.300:FF:000293">
    <property type="entry name" value="ATP binding cassette subfamily C member 1"/>
    <property type="match status" value="1"/>
</dbReference>
<dbReference type="FunFam" id="1.20.1560.10:FF:000001">
    <property type="entry name" value="ATP-binding cassette subfamily C member 1"/>
    <property type="match status" value="1"/>
</dbReference>
<dbReference type="FunFam" id="1.20.1560.10:FF:000007">
    <property type="entry name" value="ATP-binding cassette subfamily C member 1"/>
    <property type="match status" value="1"/>
</dbReference>
<dbReference type="FunFam" id="3.40.50.300:FF:000074">
    <property type="entry name" value="Multidrug resistance-associated protein 5 isoform 1"/>
    <property type="match status" value="1"/>
</dbReference>
<dbReference type="Gene3D" id="1.20.1560.10">
    <property type="entry name" value="ABC transporter type 1, transmembrane domain"/>
    <property type="match status" value="2"/>
</dbReference>
<dbReference type="Gene3D" id="3.40.50.300">
    <property type="entry name" value="P-loop containing nucleotide triphosphate hydrolases"/>
    <property type="match status" value="2"/>
</dbReference>
<dbReference type="InterPro" id="IPR003593">
    <property type="entry name" value="AAA+_ATPase"/>
</dbReference>
<dbReference type="InterPro" id="IPR011527">
    <property type="entry name" value="ABC1_TM_dom"/>
</dbReference>
<dbReference type="InterPro" id="IPR036640">
    <property type="entry name" value="ABC1_TM_sf"/>
</dbReference>
<dbReference type="InterPro" id="IPR003439">
    <property type="entry name" value="ABC_transporter-like_ATP-bd"/>
</dbReference>
<dbReference type="InterPro" id="IPR017871">
    <property type="entry name" value="ABC_transporter-like_CS"/>
</dbReference>
<dbReference type="InterPro" id="IPR050173">
    <property type="entry name" value="ABC_transporter_C-like"/>
</dbReference>
<dbReference type="InterPro" id="IPR005292">
    <property type="entry name" value="MRP"/>
</dbReference>
<dbReference type="InterPro" id="IPR027417">
    <property type="entry name" value="P-loop_NTPase"/>
</dbReference>
<dbReference type="InterPro" id="IPR056227">
    <property type="entry name" value="TMD0_ABC"/>
</dbReference>
<dbReference type="NCBIfam" id="TIGR00957">
    <property type="entry name" value="MRP_assoc_pro"/>
    <property type="match status" value="1"/>
</dbReference>
<dbReference type="PANTHER" id="PTHR24223">
    <property type="entry name" value="ATP-BINDING CASSETTE SUB-FAMILY C"/>
    <property type="match status" value="1"/>
</dbReference>
<dbReference type="PANTHER" id="PTHR24223:SF241">
    <property type="entry name" value="MULTIDRUG RESISTANCE-ASSOCIATED PROTEIN 1"/>
    <property type="match status" value="1"/>
</dbReference>
<dbReference type="Pfam" id="PF00664">
    <property type="entry name" value="ABC_membrane"/>
    <property type="match status" value="2"/>
</dbReference>
<dbReference type="Pfam" id="PF00005">
    <property type="entry name" value="ABC_tran"/>
    <property type="match status" value="2"/>
</dbReference>
<dbReference type="Pfam" id="PF24357">
    <property type="entry name" value="TMD0_ABC"/>
    <property type="match status" value="1"/>
</dbReference>
<dbReference type="SMART" id="SM00382">
    <property type="entry name" value="AAA"/>
    <property type="match status" value="2"/>
</dbReference>
<dbReference type="SUPFAM" id="SSF90123">
    <property type="entry name" value="ABC transporter transmembrane region"/>
    <property type="match status" value="2"/>
</dbReference>
<dbReference type="SUPFAM" id="SSF52540">
    <property type="entry name" value="P-loop containing nucleoside triphosphate hydrolases"/>
    <property type="match status" value="2"/>
</dbReference>
<dbReference type="PROSITE" id="PS50929">
    <property type="entry name" value="ABC_TM1F"/>
    <property type="match status" value="2"/>
</dbReference>
<dbReference type="PROSITE" id="PS00211">
    <property type="entry name" value="ABC_TRANSPORTER_1"/>
    <property type="match status" value="2"/>
</dbReference>
<dbReference type="PROSITE" id="PS50893">
    <property type="entry name" value="ABC_TRANSPORTER_2"/>
    <property type="match status" value="2"/>
</dbReference>